<proteinExistence type="inferred from homology"/>
<organism>
    <name type="scientific">Yersinia pestis bv. Antiqua (strain Angola)</name>
    <dbReference type="NCBI Taxonomy" id="349746"/>
    <lineage>
        <taxon>Bacteria</taxon>
        <taxon>Pseudomonadati</taxon>
        <taxon>Pseudomonadota</taxon>
        <taxon>Gammaproteobacteria</taxon>
        <taxon>Enterobacterales</taxon>
        <taxon>Yersiniaceae</taxon>
        <taxon>Yersinia</taxon>
    </lineage>
</organism>
<accession>A9R6Z3</accession>
<evidence type="ECO:0000255" key="1">
    <source>
        <dbReference type="HAMAP-Rule" id="MF_00244"/>
    </source>
</evidence>
<protein>
    <recommendedName>
        <fullName evidence="1">Probable nicotinate-nucleotide adenylyltransferase</fullName>
        <ecNumber evidence="1">2.7.7.18</ecNumber>
    </recommendedName>
    <alternativeName>
        <fullName evidence="1">Deamido-NAD(+) diphosphorylase</fullName>
    </alternativeName>
    <alternativeName>
        <fullName evidence="1">Deamido-NAD(+) pyrophosphorylase</fullName>
    </alternativeName>
    <alternativeName>
        <fullName evidence="1">Nicotinate mononucleotide adenylyltransferase</fullName>
        <shortName evidence="1">NaMN adenylyltransferase</shortName>
    </alternativeName>
</protein>
<dbReference type="EC" id="2.7.7.18" evidence="1"/>
<dbReference type="EMBL" id="CP000901">
    <property type="protein sequence ID" value="ABX84918.1"/>
    <property type="molecule type" value="Genomic_DNA"/>
</dbReference>
<dbReference type="RefSeq" id="WP_002210330.1">
    <property type="nucleotide sequence ID" value="NZ_CP009935.1"/>
</dbReference>
<dbReference type="SMR" id="A9R6Z3"/>
<dbReference type="GeneID" id="57976088"/>
<dbReference type="KEGG" id="ypg:YpAngola_A1845"/>
<dbReference type="PATRIC" id="fig|349746.12.peg.2821"/>
<dbReference type="UniPathway" id="UPA00253">
    <property type="reaction ID" value="UER00332"/>
</dbReference>
<dbReference type="GO" id="GO:0005524">
    <property type="term" value="F:ATP binding"/>
    <property type="evidence" value="ECO:0007669"/>
    <property type="project" value="UniProtKB-KW"/>
</dbReference>
<dbReference type="GO" id="GO:0004515">
    <property type="term" value="F:nicotinate-nucleotide adenylyltransferase activity"/>
    <property type="evidence" value="ECO:0007669"/>
    <property type="project" value="UniProtKB-UniRule"/>
</dbReference>
<dbReference type="GO" id="GO:0009435">
    <property type="term" value="P:NAD biosynthetic process"/>
    <property type="evidence" value="ECO:0007669"/>
    <property type="project" value="UniProtKB-UniRule"/>
</dbReference>
<dbReference type="CDD" id="cd02165">
    <property type="entry name" value="NMNAT"/>
    <property type="match status" value="1"/>
</dbReference>
<dbReference type="FunFam" id="3.40.50.620:FF:000039">
    <property type="entry name" value="Probable nicotinate-nucleotide adenylyltransferase"/>
    <property type="match status" value="1"/>
</dbReference>
<dbReference type="Gene3D" id="3.40.50.620">
    <property type="entry name" value="HUPs"/>
    <property type="match status" value="1"/>
</dbReference>
<dbReference type="HAMAP" id="MF_00244">
    <property type="entry name" value="NaMN_adenylyltr"/>
    <property type="match status" value="1"/>
</dbReference>
<dbReference type="InterPro" id="IPR004821">
    <property type="entry name" value="Cyt_trans-like"/>
</dbReference>
<dbReference type="InterPro" id="IPR005248">
    <property type="entry name" value="NadD/NMNAT"/>
</dbReference>
<dbReference type="InterPro" id="IPR014729">
    <property type="entry name" value="Rossmann-like_a/b/a_fold"/>
</dbReference>
<dbReference type="NCBIfam" id="TIGR00125">
    <property type="entry name" value="cyt_tran_rel"/>
    <property type="match status" value="1"/>
</dbReference>
<dbReference type="NCBIfam" id="TIGR00482">
    <property type="entry name" value="nicotinate (nicotinamide) nucleotide adenylyltransferase"/>
    <property type="match status" value="1"/>
</dbReference>
<dbReference type="NCBIfam" id="NF000839">
    <property type="entry name" value="PRK00071.1-1"/>
    <property type="match status" value="1"/>
</dbReference>
<dbReference type="NCBIfam" id="NF000840">
    <property type="entry name" value="PRK00071.1-3"/>
    <property type="match status" value="1"/>
</dbReference>
<dbReference type="PANTHER" id="PTHR39321">
    <property type="entry name" value="NICOTINATE-NUCLEOTIDE ADENYLYLTRANSFERASE-RELATED"/>
    <property type="match status" value="1"/>
</dbReference>
<dbReference type="PANTHER" id="PTHR39321:SF3">
    <property type="entry name" value="PHOSPHOPANTETHEINE ADENYLYLTRANSFERASE"/>
    <property type="match status" value="1"/>
</dbReference>
<dbReference type="Pfam" id="PF01467">
    <property type="entry name" value="CTP_transf_like"/>
    <property type="match status" value="1"/>
</dbReference>
<dbReference type="SUPFAM" id="SSF52374">
    <property type="entry name" value="Nucleotidylyl transferase"/>
    <property type="match status" value="1"/>
</dbReference>
<comment type="function">
    <text evidence="1">Catalyzes the reversible adenylation of nicotinate mononucleotide (NaMN) to nicotinic acid adenine dinucleotide (NaAD).</text>
</comment>
<comment type="catalytic activity">
    <reaction evidence="1">
        <text>nicotinate beta-D-ribonucleotide + ATP + H(+) = deamido-NAD(+) + diphosphate</text>
        <dbReference type="Rhea" id="RHEA:22860"/>
        <dbReference type="ChEBI" id="CHEBI:15378"/>
        <dbReference type="ChEBI" id="CHEBI:30616"/>
        <dbReference type="ChEBI" id="CHEBI:33019"/>
        <dbReference type="ChEBI" id="CHEBI:57502"/>
        <dbReference type="ChEBI" id="CHEBI:58437"/>
        <dbReference type="EC" id="2.7.7.18"/>
    </reaction>
</comment>
<comment type="pathway">
    <text evidence="1">Cofactor biosynthesis; NAD(+) biosynthesis; deamido-NAD(+) from nicotinate D-ribonucleotide: step 1/1.</text>
</comment>
<comment type="similarity">
    <text evidence="1">Belongs to the NadD family.</text>
</comment>
<reference key="1">
    <citation type="journal article" date="2010" name="J. Bacteriol.">
        <title>Genome sequence of the deep-rooted Yersinia pestis strain Angola reveals new insights into the evolution and pangenome of the plague bacterium.</title>
        <authorList>
            <person name="Eppinger M."/>
            <person name="Worsham P.L."/>
            <person name="Nikolich M.P."/>
            <person name="Riley D.R."/>
            <person name="Sebastian Y."/>
            <person name="Mou S."/>
            <person name="Achtman M."/>
            <person name="Lindler L.E."/>
            <person name="Ravel J."/>
        </authorList>
    </citation>
    <scope>NUCLEOTIDE SEQUENCE [LARGE SCALE GENOMIC DNA]</scope>
    <source>
        <strain>Angola</strain>
    </source>
</reference>
<gene>
    <name evidence="1" type="primary">nadD</name>
    <name type="ordered locus">YpAngola_A1845</name>
</gene>
<name>NADD_YERPG</name>
<feature type="chain" id="PRO_1000100805" description="Probable nicotinate-nucleotide adenylyltransferase">
    <location>
        <begin position="1"/>
        <end position="220"/>
    </location>
</feature>
<sequence length="220" mass="24873">MPIKSSDHSLYALFGGTFDPIHYGHLKPVEALAQQVGLQHIILLPNHVPPHRPQPEANAQQRLKMVELAVAGNPLFSVDSRELLRDSPSFTIETLEALRKERGAEQPLAFIIGQDSLLSLHKWHRWQALLDVCHLLVCARPGYSQSLETPELQQWLESHKVMDPQALSQRPHGAIYLADTPLLDISATDIRRRRHNGESCDDLLPQAVQRYIELQGLYRG</sequence>
<keyword id="KW-0067">ATP-binding</keyword>
<keyword id="KW-0520">NAD</keyword>
<keyword id="KW-0547">Nucleotide-binding</keyword>
<keyword id="KW-0548">Nucleotidyltransferase</keyword>
<keyword id="KW-0662">Pyridine nucleotide biosynthesis</keyword>
<keyword id="KW-0808">Transferase</keyword>